<proteinExistence type="inferred from homology"/>
<sequence>MATNRAKSSTKYIFVTGGVASSLGKGLTAASLGQLLSSRGLRVTMQKLDPYLNVDPGTMNPFEHGEVFVTEDGAETDLDLGHYERFLDRNLSAAGNVTTGKVYSNVIAKERRGEFLGKTVQVIPHITDEIKSAVLAMGQPDKNGQAPDVVISEIGGTVGDIESQPFLEAIRQVRHEAGRENIAFIHVSLVPYLAPSGELKTKPTQHSVAELRSIGIVPDAIVLRADREVPQAMKSKIALMCDVDEDGVVSCPDAPSIYDIPKVLHSQHLDNYIIRRLNLPFRDVDWTTWGNLLESVHNPQGEVTIGIVGKYIDLPDAYLSVAEAIRAGGFGANVRANVKWVASDECETEKGAAEALKDVDGVVIPGGFGNRGIEGKIGAITYARKNKLPLLGICLGLQCIVIEAARTAGLTDASSTEFDANASTPVISTMEEQKAAVSGEADLGGTMRLGAYPARLAEGSLVAEMYGATDVSERHRHRYEVNNAYREQITEGSGLQFSGTSPDGTLVEFVEYPKDVHPYFVATQAHPEYKSRPTRSHPLFQGLVDAALKHQAGRS</sequence>
<comment type="function">
    <text evidence="1">Catalyzes the ATP-dependent amination of UTP to CTP with either L-glutamine or ammonia as the source of nitrogen. Regulates intracellular CTP levels through interactions with the four ribonucleotide triphosphates.</text>
</comment>
<comment type="catalytic activity">
    <reaction evidence="1">
        <text>UTP + L-glutamine + ATP + H2O = CTP + L-glutamate + ADP + phosphate + 2 H(+)</text>
        <dbReference type="Rhea" id="RHEA:26426"/>
        <dbReference type="ChEBI" id="CHEBI:15377"/>
        <dbReference type="ChEBI" id="CHEBI:15378"/>
        <dbReference type="ChEBI" id="CHEBI:29985"/>
        <dbReference type="ChEBI" id="CHEBI:30616"/>
        <dbReference type="ChEBI" id="CHEBI:37563"/>
        <dbReference type="ChEBI" id="CHEBI:43474"/>
        <dbReference type="ChEBI" id="CHEBI:46398"/>
        <dbReference type="ChEBI" id="CHEBI:58359"/>
        <dbReference type="ChEBI" id="CHEBI:456216"/>
        <dbReference type="EC" id="6.3.4.2"/>
    </reaction>
</comment>
<comment type="catalytic activity">
    <reaction evidence="1">
        <text>L-glutamine + H2O = L-glutamate + NH4(+)</text>
        <dbReference type="Rhea" id="RHEA:15889"/>
        <dbReference type="ChEBI" id="CHEBI:15377"/>
        <dbReference type="ChEBI" id="CHEBI:28938"/>
        <dbReference type="ChEBI" id="CHEBI:29985"/>
        <dbReference type="ChEBI" id="CHEBI:58359"/>
    </reaction>
</comment>
<comment type="catalytic activity">
    <reaction evidence="1">
        <text>UTP + NH4(+) + ATP = CTP + ADP + phosphate + 2 H(+)</text>
        <dbReference type="Rhea" id="RHEA:16597"/>
        <dbReference type="ChEBI" id="CHEBI:15378"/>
        <dbReference type="ChEBI" id="CHEBI:28938"/>
        <dbReference type="ChEBI" id="CHEBI:30616"/>
        <dbReference type="ChEBI" id="CHEBI:37563"/>
        <dbReference type="ChEBI" id="CHEBI:43474"/>
        <dbReference type="ChEBI" id="CHEBI:46398"/>
        <dbReference type="ChEBI" id="CHEBI:456216"/>
    </reaction>
</comment>
<comment type="activity regulation">
    <text evidence="1">Allosterically activated by GTP, when glutamine is the substrate; GTP has no effect on the reaction when ammonia is the substrate. The allosteric effector GTP functions by stabilizing the protein conformation that binds the tetrahedral intermediate(s) formed during glutamine hydrolysis. Inhibited by the product CTP, via allosteric rather than competitive inhibition.</text>
</comment>
<comment type="pathway">
    <text evidence="1">Pyrimidine metabolism; CTP biosynthesis via de novo pathway; CTP from UDP: step 2/2.</text>
</comment>
<comment type="subunit">
    <text evidence="1">Homotetramer.</text>
</comment>
<comment type="miscellaneous">
    <text evidence="1">CTPSs have evolved a hybrid strategy for distinguishing between UTP and CTP. The overlapping regions of the product feedback inhibitory and substrate sites recognize a common feature in both compounds, the triphosphate moiety. To differentiate isosteric substrate and product pyrimidine rings, an additional pocket far from the expected kinase/ligase catalytic site, specifically recognizes the cytosine and ribose portions of the product inhibitor.</text>
</comment>
<comment type="similarity">
    <text evidence="1">Belongs to the CTP synthase family.</text>
</comment>
<dbReference type="EC" id="6.3.4.2" evidence="1"/>
<dbReference type="EMBL" id="CR931997">
    <property type="protein sequence ID" value="CAI37035.1"/>
    <property type="molecule type" value="Genomic_DNA"/>
</dbReference>
<dbReference type="RefSeq" id="WP_011273465.1">
    <property type="nucleotide sequence ID" value="NC_007164.1"/>
</dbReference>
<dbReference type="SMR" id="Q4JVX2"/>
<dbReference type="STRING" id="306537.jk0871"/>
<dbReference type="MEROPS" id="C26.964"/>
<dbReference type="KEGG" id="cjk:jk0871"/>
<dbReference type="PATRIC" id="fig|306537.10.peg.883"/>
<dbReference type="eggNOG" id="COG0504">
    <property type="taxonomic scope" value="Bacteria"/>
</dbReference>
<dbReference type="HOGENOM" id="CLU_011675_5_0_11"/>
<dbReference type="OrthoDB" id="9801107at2"/>
<dbReference type="UniPathway" id="UPA00159">
    <property type="reaction ID" value="UER00277"/>
</dbReference>
<dbReference type="Proteomes" id="UP000000545">
    <property type="component" value="Chromosome"/>
</dbReference>
<dbReference type="GO" id="GO:0005829">
    <property type="term" value="C:cytosol"/>
    <property type="evidence" value="ECO:0007669"/>
    <property type="project" value="TreeGrafter"/>
</dbReference>
<dbReference type="GO" id="GO:0005524">
    <property type="term" value="F:ATP binding"/>
    <property type="evidence" value="ECO:0007669"/>
    <property type="project" value="UniProtKB-KW"/>
</dbReference>
<dbReference type="GO" id="GO:0003883">
    <property type="term" value="F:CTP synthase activity"/>
    <property type="evidence" value="ECO:0007669"/>
    <property type="project" value="UniProtKB-UniRule"/>
</dbReference>
<dbReference type="GO" id="GO:0004359">
    <property type="term" value="F:glutaminase activity"/>
    <property type="evidence" value="ECO:0007669"/>
    <property type="project" value="RHEA"/>
</dbReference>
<dbReference type="GO" id="GO:0042802">
    <property type="term" value="F:identical protein binding"/>
    <property type="evidence" value="ECO:0007669"/>
    <property type="project" value="TreeGrafter"/>
</dbReference>
<dbReference type="GO" id="GO:0046872">
    <property type="term" value="F:metal ion binding"/>
    <property type="evidence" value="ECO:0007669"/>
    <property type="project" value="UniProtKB-KW"/>
</dbReference>
<dbReference type="GO" id="GO:0044210">
    <property type="term" value="P:'de novo' CTP biosynthetic process"/>
    <property type="evidence" value="ECO:0007669"/>
    <property type="project" value="UniProtKB-UniRule"/>
</dbReference>
<dbReference type="GO" id="GO:0019856">
    <property type="term" value="P:pyrimidine nucleobase biosynthetic process"/>
    <property type="evidence" value="ECO:0007669"/>
    <property type="project" value="TreeGrafter"/>
</dbReference>
<dbReference type="CDD" id="cd03113">
    <property type="entry name" value="CTPS_N"/>
    <property type="match status" value="1"/>
</dbReference>
<dbReference type="CDD" id="cd01746">
    <property type="entry name" value="GATase1_CTP_Synthase"/>
    <property type="match status" value="1"/>
</dbReference>
<dbReference type="FunFam" id="3.40.50.300:FF:000009">
    <property type="entry name" value="CTP synthase"/>
    <property type="match status" value="1"/>
</dbReference>
<dbReference type="FunFam" id="3.40.50.880:FF:000002">
    <property type="entry name" value="CTP synthase"/>
    <property type="match status" value="1"/>
</dbReference>
<dbReference type="Gene3D" id="3.40.50.880">
    <property type="match status" value="1"/>
</dbReference>
<dbReference type="Gene3D" id="3.40.50.300">
    <property type="entry name" value="P-loop containing nucleotide triphosphate hydrolases"/>
    <property type="match status" value="1"/>
</dbReference>
<dbReference type="HAMAP" id="MF_01227">
    <property type="entry name" value="PyrG"/>
    <property type="match status" value="1"/>
</dbReference>
<dbReference type="InterPro" id="IPR029062">
    <property type="entry name" value="Class_I_gatase-like"/>
</dbReference>
<dbReference type="InterPro" id="IPR004468">
    <property type="entry name" value="CTP_synthase"/>
</dbReference>
<dbReference type="InterPro" id="IPR017456">
    <property type="entry name" value="CTP_synthase_N"/>
</dbReference>
<dbReference type="InterPro" id="IPR017926">
    <property type="entry name" value="GATASE"/>
</dbReference>
<dbReference type="InterPro" id="IPR033828">
    <property type="entry name" value="GATase1_CTP_Synthase"/>
</dbReference>
<dbReference type="InterPro" id="IPR027417">
    <property type="entry name" value="P-loop_NTPase"/>
</dbReference>
<dbReference type="NCBIfam" id="NF003792">
    <property type="entry name" value="PRK05380.1"/>
    <property type="match status" value="1"/>
</dbReference>
<dbReference type="NCBIfam" id="TIGR00337">
    <property type="entry name" value="PyrG"/>
    <property type="match status" value="1"/>
</dbReference>
<dbReference type="PANTHER" id="PTHR11550">
    <property type="entry name" value="CTP SYNTHASE"/>
    <property type="match status" value="1"/>
</dbReference>
<dbReference type="PANTHER" id="PTHR11550:SF0">
    <property type="entry name" value="CTP SYNTHASE-RELATED"/>
    <property type="match status" value="1"/>
</dbReference>
<dbReference type="Pfam" id="PF06418">
    <property type="entry name" value="CTP_synth_N"/>
    <property type="match status" value="1"/>
</dbReference>
<dbReference type="Pfam" id="PF00117">
    <property type="entry name" value="GATase"/>
    <property type="match status" value="1"/>
</dbReference>
<dbReference type="SUPFAM" id="SSF52317">
    <property type="entry name" value="Class I glutamine amidotransferase-like"/>
    <property type="match status" value="1"/>
</dbReference>
<dbReference type="SUPFAM" id="SSF52540">
    <property type="entry name" value="P-loop containing nucleoside triphosphate hydrolases"/>
    <property type="match status" value="1"/>
</dbReference>
<dbReference type="PROSITE" id="PS51273">
    <property type="entry name" value="GATASE_TYPE_1"/>
    <property type="match status" value="1"/>
</dbReference>
<evidence type="ECO:0000255" key="1">
    <source>
        <dbReference type="HAMAP-Rule" id="MF_01227"/>
    </source>
</evidence>
<feature type="chain" id="PRO_0000266100" description="CTP synthase">
    <location>
        <begin position="1"/>
        <end position="555"/>
    </location>
</feature>
<feature type="domain" description="Glutamine amidotransferase type-1" evidence="1">
    <location>
        <begin position="304"/>
        <end position="553"/>
    </location>
</feature>
<feature type="region of interest" description="Amidoligase domain" evidence="1">
    <location>
        <begin position="1"/>
        <end position="279"/>
    </location>
</feature>
<feature type="active site" description="Nucleophile; for glutamine hydrolysis" evidence="1">
    <location>
        <position position="394"/>
    </location>
</feature>
<feature type="active site" evidence="1">
    <location>
        <position position="526"/>
    </location>
</feature>
<feature type="active site" evidence="1">
    <location>
        <position position="528"/>
    </location>
</feature>
<feature type="binding site" evidence="1">
    <location>
        <position position="21"/>
    </location>
    <ligand>
        <name>CTP</name>
        <dbReference type="ChEBI" id="CHEBI:37563"/>
        <note>allosteric inhibitor</note>
    </ligand>
</feature>
<feature type="binding site" evidence="1">
    <location>
        <position position="21"/>
    </location>
    <ligand>
        <name>UTP</name>
        <dbReference type="ChEBI" id="CHEBI:46398"/>
    </ligand>
</feature>
<feature type="binding site" evidence="1">
    <location>
        <begin position="22"/>
        <end position="27"/>
    </location>
    <ligand>
        <name>ATP</name>
        <dbReference type="ChEBI" id="CHEBI:30616"/>
    </ligand>
</feature>
<feature type="binding site" evidence="1">
    <location>
        <position position="79"/>
    </location>
    <ligand>
        <name>ATP</name>
        <dbReference type="ChEBI" id="CHEBI:30616"/>
    </ligand>
</feature>
<feature type="binding site" evidence="1">
    <location>
        <position position="79"/>
    </location>
    <ligand>
        <name>Mg(2+)</name>
        <dbReference type="ChEBI" id="CHEBI:18420"/>
    </ligand>
</feature>
<feature type="binding site" evidence="1">
    <location>
        <position position="153"/>
    </location>
    <ligand>
        <name>Mg(2+)</name>
        <dbReference type="ChEBI" id="CHEBI:18420"/>
    </ligand>
</feature>
<feature type="binding site" evidence="1">
    <location>
        <begin position="160"/>
        <end position="162"/>
    </location>
    <ligand>
        <name>CTP</name>
        <dbReference type="ChEBI" id="CHEBI:37563"/>
        <note>allosteric inhibitor</note>
    </ligand>
</feature>
<feature type="binding site" evidence="1">
    <location>
        <begin position="200"/>
        <end position="205"/>
    </location>
    <ligand>
        <name>CTP</name>
        <dbReference type="ChEBI" id="CHEBI:37563"/>
        <note>allosteric inhibitor</note>
    </ligand>
</feature>
<feature type="binding site" evidence="1">
    <location>
        <begin position="200"/>
        <end position="205"/>
    </location>
    <ligand>
        <name>UTP</name>
        <dbReference type="ChEBI" id="CHEBI:46398"/>
    </ligand>
</feature>
<feature type="binding site" evidence="1">
    <location>
        <position position="236"/>
    </location>
    <ligand>
        <name>CTP</name>
        <dbReference type="ChEBI" id="CHEBI:37563"/>
        <note>allosteric inhibitor</note>
    </ligand>
</feature>
<feature type="binding site" evidence="1">
    <location>
        <position position="236"/>
    </location>
    <ligand>
        <name>UTP</name>
        <dbReference type="ChEBI" id="CHEBI:46398"/>
    </ligand>
</feature>
<feature type="binding site" evidence="1">
    <location>
        <position position="367"/>
    </location>
    <ligand>
        <name>L-glutamine</name>
        <dbReference type="ChEBI" id="CHEBI:58359"/>
    </ligand>
</feature>
<feature type="binding site" evidence="1">
    <location>
        <begin position="395"/>
        <end position="398"/>
    </location>
    <ligand>
        <name>L-glutamine</name>
        <dbReference type="ChEBI" id="CHEBI:58359"/>
    </ligand>
</feature>
<feature type="binding site" evidence="1">
    <location>
        <position position="417"/>
    </location>
    <ligand>
        <name>L-glutamine</name>
        <dbReference type="ChEBI" id="CHEBI:58359"/>
    </ligand>
</feature>
<feature type="binding site" evidence="1">
    <location>
        <position position="478"/>
    </location>
    <ligand>
        <name>L-glutamine</name>
        <dbReference type="ChEBI" id="CHEBI:58359"/>
    </ligand>
</feature>
<accession>Q4JVX2</accession>
<organism>
    <name type="scientific">Corynebacterium jeikeium (strain K411)</name>
    <dbReference type="NCBI Taxonomy" id="306537"/>
    <lineage>
        <taxon>Bacteria</taxon>
        <taxon>Bacillati</taxon>
        <taxon>Actinomycetota</taxon>
        <taxon>Actinomycetes</taxon>
        <taxon>Mycobacteriales</taxon>
        <taxon>Corynebacteriaceae</taxon>
        <taxon>Corynebacterium</taxon>
    </lineage>
</organism>
<keyword id="KW-0067">ATP-binding</keyword>
<keyword id="KW-0315">Glutamine amidotransferase</keyword>
<keyword id="KW-0436">Ligase</keyword>
<keyword id="KW-0460">Magnesium</keyword>
<keyword id="KW-0479">Metal-binding</keyword>
<keyword id="KW-0547">Nucleotide-binding</keyword>
<keyword id="KW-0665">Pyrimidine biosynthesis</keyword>
<keyword id="KW-1185">Reference proteome</keyword>
<reference key="1">
    <citation type="journal article" date="2005" name="J. Bacteriol.">
        <title>Complete genome sequence and analysis of the multiresistant nosocomial pathogen Corynebacterium jeikeium K411, a lipid-requiring bacterium of the human skin flora.</title>
        <authorList>
            <person name="Tauch A."/>
            <person name="Kaiser O."/>
            <person name="Hain T."/>
            <person name="Goesmann A."/>
            <person name="Weisshaar B."/>
            <person name="Albersmeier A."/>
            <person name="Bekel T."/>
            <person name="Bischoff N."/>
            <person name="Brune I."/>
            <person name="Chakraborty T."/>
            <person name="Kalinowski J."/>
            <person name="Meyer F."/>
            <person name="Rupp O."/>
            <person name="Schneiker S."/>
            <person name="Viehoever P."/>
            <person name="Puehler A."/>
        </authorList>
    </citation>
    <scope>NUCLEOTIDE SEQUENCE [LARGE SCALE GENOMIC DNA]</scope>
    <source>
        <strain>K411</strain>
    </source>
</reference>
<name>PYRG_CORJK</name>
<protein>
    <recommendedName>
        <fullName evidence="1">CTP synthase</fullName>
        <ecNumber evidence="1">6.3.4.2</ecNumber>
    </recommendedName>
    <alternativeName>
        <fullName evidence="1">Cytidine 5'-triphosphate synthase</fullName>
    </alternativeName>
    <alternativeName>
        <fullName evidence="1">Cytidine triphosphate synthetase</fullName>
        <shortName evidence="1">CTP synthetase</shortName>
        <shortName evidence="1">CTPS</shortName>
    </alternativeName>
    <alternativeName>
        <fullName evidence="1">UTP--ammonia ligase</fullName>
    </alternativeName>
</protein>
<gene>
    <name evidence="1" type="primary">pyrG</name>
    <name type="ordered locus">jk0871</name>
</gene>